<comment type="function">
    <text evidence="1">Together with the chaperonin GroEL, plays an essential role in assisting protein folding. The GroEL-GroES system forms a nano-cage that allows encapsulation of the non-native substrate proteins and provides a physical environment optimized to promote and accelerate protein folding. GroES binds to the apical surface of the GroEL ring, thereby capping the opening of the GroEL channel.</text>
</comment>
<comment type="subunit">
    <text evidence="1">Heptamer of 7 subunits arranged in a ring. Interacts with the chaperonin GroEL.</text>
</comment>
<comment type="subcellular location">
    <subcellularLocation>
        <location evidence="1">Cytoplasm</location>
    </subcellularLocation>
</comment>
<comment type="similarity">
    <text evidence="1">Belongs to the GroES chaperonin family.</text>
</comment>
<gene>
    <name evidence="1" type="primary">groES</name>
    <name evidence="1" type="synonym">groS</name>
    <name type="ordered locus">BCE33L0239</name>
</gene>
<sequence length="94" mass="10070">MLKPLGDRVVIELVQAEEKTASGIVLPDTAKEKPQEGKVIAVGTGRVLENGERVALEVAAGDLIIFSKYAGTEVKYEGTDYLILRESDILAVIG</sequence>
<proteinExistence type="inferred from homology"/>
<name>CH10_BACCZ</name>
<organism>
    <name type="scientific">Bacillus cereus (strain ZK / E33L)</name>
    <dbReference type="NCBI Taxonomy" id="288681"/>
    <lineage>
        <taxon>Bacteria</taxon>
        <taxon>Bacillati</taxon>
        <taxon>Bacillota</taxon>
        <taxon>Bacilli</taxon>
        <taxon>Bacillales</taxon>
        <taxon>Bacillaceae</taxon>
        <taxon>Bacillus</taxon>
        <taxon>Bacillus cereus group</taxon>
    </lineage>
</organism>
<keyword id="KW-0143">Chaperone</keyword>
<keyword id="KW-0963">Cytoplasm</keyword>
<reference key="1">
    <citation type="journal article" date="2006" name="J. Bacteriol.">
        <title>Pathogenomic sequence analysis of Bacillus cereus and Bacillus thuringiensis isolates closely related to Bacillus anthracis.</title>
        <authorList>
            <person name="Han C.S."/>
            <person name="Xie G."/>
            <person name="Challacombe J.F."/>
            <person name="Altherr M.R."/>
            <person name="Bhotika S.S."/>
            <person name="Bruce D."/>
            <person name="Campbell C.S."/>
            <person name="Campbell M.L."/>
            <person name="Chen J."/>
            <person name="Chertkov O."/>
            <person name="Cleland C."/>
            <person name="Dimitrijevic M."/>
            <person name="Doggett N.A."/>
            <person name="Fawcett J.J."/>
            <person name="Glavina T."/>
            <person name="Goodwin L.A."/>
            <person name="Hill K.K."/>
            <person name="Hitchcock P."/>
            <person name="Jackson P.J."/>
            <person name="Keim P."/>
            <person name="Kewalramani A.R."/>
            <person name="Longmire J."/>
            <person name="Lucas S."/>
            <person name="Malfatti S."/>
            <person name="McMurry K."/>
            <person name="Meincke L.J."/>
            <person name="Misra M."/>
            <person name="Moseman B.L."/>
            <person name="Mundt M."/>
            <person name="Munk A.C."/>
            <person name="Okinaka R.T."/>
            <person name="Parson-Quintana B."/>
            <person name="Reilly L.P."/>
            <person name="Richardson P."/>
            <person name="Robinson D.L."/>
            <person name="Rubin E."/>
            <person name="Saunders E."/>
            <person name="Tapia R."/>
            <person name="Tesmer J.G."/>
            <person name="Thayer N."/>
            <person name="Thompson L.S."/>
            <person name="Tice H."/>
            <person name="Ticknor L.O."/>
            <person name="Wills P.L."/>
            <person name="Brettin T.S."/>
            <person name="Gilna P."/>
        </authorList>
    </citation>
    <scope>NUCLEOTIDE SEQUENCE [LARGE SCALE GENOMIC DNA]</scope>
    <source>
        <strain>ZK / E33L</strain>
    </source>
</reference>
<protein>
    <recommendedName>
        <fullName evidence="1">Co-chaperonin GroES</fullName>
    </recommendedName>
    <alternativeName>
        <fullName evidence="1">10 kDa chaperonin</fullName>
    </alternativeName>
    <alternativeName>
        <fullName evidence="1">Chaperonin-10</fullName>
        <shortName evidence="1">Cpn10</shortName>
    </alternativeName>
</protein>
<evidence type="ECO:0000255" key="1">
    <source>
        <dbReference type="HAMAP-Rule" id="MF_00580"/>
    </source>
</evidence>
<feature type="chain" id="PRO_0000174691" description="Co-chaperonin GroES">
    <location>
        <begin position="1"/>
        <end position="94"/>
    </location>
</feature>
<accession>Q63GV8</accession>
<dbReference type="EMBL" id="CP000001">
    <property type="protein sequence ID" value="AAU19995.1"/>
    <property type="molecule type" value="Genomic_DNA"/>
</dbReference>
<dbReference type="RefSeq" id="WP_000917306.1">
    <property type="nucleotide sequence ID" value="NZ_CP009968.1"/>
</dbReference>
<dbReference type="SMR" id="Q63GV8"/>
<dbReference type="GeneID" id="93010771"/>
<dbReference type="KEGG" id="bcz:BCE33L0239"/>
<dbReference type="PATRIC" id="fig|288681.22.peg.5371"/>
<dbReference type="Proteomes" id="UP000002612">
    <property type="component" value="Chromosome"/>
</dbReference>
<dbReference type="GO" id="GO:0005737">
    <property type="term" value="C:cytoplasm"/>
    <property type="evidence" value="ECO:0007669"/>
    <property type="project" value="UniProtKB-SubCell"/>
</dbReference>
<dbReference type="GO" id="GO:0005524">
    <property type="term" value="F:ATP binding"/>
    <property type="evidence" value="ECO:0007669"/>
    <property type="project" value="InterPro"/>
</dbReference>
<dbReference type="GO" id="GO:0046872">
    <property type="term" value="F:metal ion binding"/>
    <property type="evidence" value="ECO:0007669"/>
    <property type="project" value="TreeGrafter"/>
</dbReference>
<dbReference type="GO" id="GO:0044183">
    <property type="term" value="F:protein folding chaperone"/>
    <property type="evidence" value="ECO:0007669"/>
    <property type="project" value="InterPro"/>
</dbReference>
<dbReference type="GO" id="GO:0051087">
    <property type="term" value="F:protein-folding chaperone binding"/>
    <property type="evidence" value="ECO:0007669"/>
    <property type="project" value="TreeGrafter"/>
</dbReference>
<dbReference type="GO" id="GO:0051082">
    <property type="term" value="F:unfolded protein binding"/>
    <property type="evidence" value="ECO:0007669"/>
    <property type="project" value="TreeGrafter"/>
</dbReference>
<dbReference type="GO" id="GO:0051085">
    <property type="term" value="P:chaperone cofactor-dependent protein refolding"/>
    <property type="evidence" value="ECO:0007669"/>
    <property type="project" value="TreeGrafter"/>
</dbReference>
<dbReference type="CDD" id="cd00320">
    <property type="entry name" value="cpn10"/>
    <property type="match status" value="1"/>
</dbReference>
<dbReference type="FunFam" id="2.30.33.40:FF:000001">
    <property type="entry name" value="10 kDa chaperonin"/>
    <property type="match status" value="1"/>
</dbReference>
<dbReference type="Gene3D" id="2.30.33.40">
    <property type="entry name" value="GroES chaperonin"/>
    <property type="match status" value="1"/>
</dbReference>
<dbReference type="HAMAP" id="MF_00580">
    <property type="entry name" value="CH10"/>
    <property type="match status" value="1"/>
</dbReference>
<dbReference type="InterPro" id="IPR020818">
    <property type="entry name" value="Chaperonin_GroES"/>
</dbReference>
<dbReference type="InterPro" id="IPR037124">
    <property type="entry name" value="Chaperonin_GroES_sf"/>
</dbReference>
<dbReference type="InterPro" id="IPR018369">
    <property type="entry name" value="Chaprnonin_Cpn10_CS"/>
</dbReference>
<dbReference type="InterPro" id="IPR011032">
    <property type="entry name" value="GroES-like_sf"/>
</dbReference>
<dbReference type="NCBIfam" id="NF001527">
    <property type="entry name" value="PRK00364.1-2"/>
    <property type="match status" value="1"/>
</dbReference>
<dbReference type="NCBIfam" id="NF001530">
    <property type="entry name" value="PRK00364.1-6"/>
    <property type="match status" value="1"/>
</dbReference>
<dbReference type="NCBIfam" id="NF001531">
    <property type="entry name" value="PRK00364.2-2"/>
    <property type="match status" value="1"/>
</dbReference>
<dbReference type="NCBIfam" id="NF001533">
    <property type="entry name" value="PRK00364.2-4"/>
    <property type="match status" value="1"/>
</dbReference>
<dbReference type="NCBIfam" id="NF001534">
    <property type="entry name" value="PRK00364.2-5"/>
    <property type="match status" value="1"/>
</dbReference>
<dbReference type="PANTHER" id="PTHR10772">
    <property type="entry name" value="10 KDA HEAT SHOCK PROTEIN"/>
    <property type="match status" value="1"/>
</dbReference>
<dbReference type="PANTHER" id="PTHR10772:SF58">
    <property type="entry name" value="CO-CHAPERONIN GROES"/>
    <property type="match status" value="1"/>
</dbReference>
<dbReference type="Pfam" id="PF00166">
    <property type="entry name" value="Cpn10"/>
    <property type="match status" value="1"/>
</dbReference>
<dbReference type="PRINTS" id="PR00297">
    <property type="entry name" value="CHAPERONIN10"/>
</dbReference>
<dbReference type="SMART" id="SM00883">
    <property type="entry name" value="Cpn10"/>
    <property type="match status" value="1"/>
</dbReference>
<dbReference type="SUPFAM" id="SSF50129">
    <property type="entry name" value="GroES-like"/>
    <property type="match status" value="1"/>
</dbReference>
<dbReference type="PROSITE" id="PS00681">
    <property type="entry name" value="CHAPERONINS_CPN10"/>
    <property type="match status" value="1"/>
</dbReference>